<organism>
    <name type="scientific">Rhizobium leguminosarum bv. trifolii (strain WSM2304)</name>
    <dbReference type="NCBI Taxonomy" id="395492"/>
    <lineage>
        <taxon>Bacteria</taxon>
        <taxon>Pseudomonadati</taxon>
        <taxon>Pseudomonadota</taxon>
        <taxon>Alphaproteobacteria</taxon>
        <taxon>Hyphomicrobiales</taxon>
        <taxon>Rhizobiaceae</taxon>
        <taxon>Rhizobium/Agrobacterium group</taxon>
        <taxon>Rhizobium</taxon>
    </lineage>
</organism>
<protein>
    <recommendedName>
        <fullName evidence="1">Large ribosomal subunit protein uL2</fullName>
    </recommendedName>
    <alternativeName>
        <fullName evidence="3">50S ribosomal protein L2</fullName>
    </alternativeName>
</protein>
<dbReference type="EMBL" id="CP001191">
    <property type="protein sequence ID" value="ACI54629.1"/>
    <property type="molecule type" value="Genomic_DNA"/>
</dbReference>
<dbReference type="RefSeq" id="WP_003547551.1">
    <property type="nucleotide sequence ID" value="NC_011369.1"/>
</dbReference>
<dbReference type="SMR" id="B5ZYT8"/>
<dbReference type="STRING" id="395492.Rleg2_1335"/>
<dbReference type="KEGG" id="rlt:Rleg2_1335"/>
<dbReference type="eggNOG" id="COG0090">
    <property type="taxonomic scope" value="Bacteria"/>
</dbReference>
<dbReference type="HOGENOM" id="CLU_036235_2_1_5"/>
<dbReference type="Proteomes" id="UP000008330">
    <property type="component" value="Chromosome"/>
</dbReference>
<dbReference type="GO" id="GO:0015934">
    <property type="term" value="C:large ribosomal subunit"/>
    <property type="evidence" value="ECO:0007669"/>
    <property type="project" value="InterPro"/>
</dbReference>
<dbReference type="GO" id="GO:0019843">
    <property type="term" value="F:rRNA binding"/>
    <property type="evidence" value="ECO:0007669"/>
    <property type="project" value="UniProtKB-UniRule"/>
</dbReference>
<dbReference type="GO" id="GO:0003735">
    <property type="term" value="F:structural constituent of ribosome"/>
    <property type="evidence" value="ECO:0007669"/>
    <property type="project" value="InterPro"/>
</dbReference>
<dbReference type="GO" id="GO:0016740">
    <property type="term" value="F:transferase activity"/>
    <property type="evidence" value="ECO:0007669"/>
    <property type="project" value="InterPro"/>
</dbReference>
<dbReference type="GO" id="GO:0002181">
    <property type="term" value="P:cytoplasmic translation"/>
    <property type="evidence" value="ECO:0007669"/>
    <property type="project" value="TreeGrafter"/>
</dbReference>
<dbReference type="FunFam" id="2.30.30.30:FF:000001">
    <property type="entry name" value="50S ribosomal protein L2"/>
    <property type="match status" value="1"/>
</dbReference>
<dbReference type="FunFam" id="2.40.50.140:FF:000003">
    <property type="entry name" value="50S ribosomal protein L2"/>
    <property type="match status" value="1"/>
</dbReference>
<dbReference type="FunFam" id="4.10.950.10:FF:000001">
    <property type="entry name" value="50S ribosomal protein L2"/>
    <property type="match status" value="1"/>
</dbReference>
<dbReference type="Gene3D" id="2.30.30.30">
    <property type="match status" value="1"/>
</dbReference>
<dbReference type="Gene3D" id="2.40.50.140">
    <property type="entry name" value="Nucleic acid-binding proteins"/>
    <property type="match status" value="1"/>
</dbReference>
<dbReference type="Gene3D" id="4.10.950.10">
    <property type="entry name" value="Ribosomal protein L2, domain 3"/>
    <property type="match status" value="1"/>
</dbReference>
<dbReference type="HAMAP" id="MF_01320_B">
    <property type="entry name" value="Ribosomal_uL2_B"/>
    <property type="match status" value="1"/>
</dbReference>
<dbReference type="InterPro" id="IPR012340">
    <property type="entry name" value="NA-bd_OB-fold"/>
</dbReference>
<dbReference type="InterPro" id="IPR014722">
    <property type="entry name" value="Rib_uL2_dom2"/>
</dbReference>
<dbReference type="InterPro" id="IPR002171">
    <property type="entry name" value="Ribosomal_uL2"/>
</dbReference>
<dbReference type="InterPro" id="IPR005880">
    <property type="entry name" value="Ribosomal_uL2_bac/org-type"/>
</dbReference>
<dbReference type="InterPro" id="IPR022669">
    <property type="entry name" value="Ribosomal_uL2_C"/>
</dbReference>
<dbReference type="InterPro" id="IPR022671">
    <property type="entry name" value="Ribosomal_uL2_CS"/>
</dbReference>
<dbReference type="InterPro" id="IPR014726">
    <property type="entry name" value="Ribosomal_uL2_dom3"/>
</dbReference>
<dbReference type="InterPro" id="IPR022666">
    <property type="entry name" value="Ribosomal_uL2_RNA-bd_dom"/>
</dbReference>
<dbReference type="InterPro" id="IPR008991">
    <property type="entry name" value="Translation_prot_SH3-like_sf"/>
</dbReference>
<dbReference type="NCBIfam" id="TIGR01171">
    <property type="entry name" value="rplB_bact"/>
    <property type="match status" value="1"/>
</dbReference>
<dbReference type="PANTHER" id="PTHR13691:SF5">
    <property type="entry name" value="LARGE RIBOSOMAL SUBUNIT PROTEIN UL2M"/>
    <property type="match status" value="1"/>
</dbReference>
<dbReference type="PANTHER" id="PTHR13691">
    <property type="entry name" value="RIBOSOMAL PROTEIN L2"/>
    <property type="match status" value="1"/>
</dbReference>
<dbReference type="Pfam" id="PF00181">
    <property type="entry name" value="Ribosomal_L2"/>
    <property type="match status" value="1"/>
</dbReference>
<dbReference type="Pfam" id="PF03947">
    <property type="entry name" value="Ribosomal_L2_C"/>
    <property type="match status" value="1"/>
</dbReference>
<dbReference type="PIRSF" id="PIRSF002158">
    <property type="entry name" value="Ribosomal_L2"/>
    <property type="match status" value="1"/>
</dbReference>
<dbReference type="SMART" id="SM01383">
    <property type="entry name" value="Ribosomal_L2"/>
    <property type="match status" value="1"/>
</dbReference>
<dbReference type="SMART" id="SM01382">
    <property type="entry name" value="Ribosomal_L2_C"/>
    <property type="match status" value="1"/>
</dbReference>
<dbReference type="SUPFAM" id="SSF50249">
    <property type="entry name" value="Nucleic acid-binding proteins"/>
    <property type="match status" value="1"/>
</dbReference>
<dbReference type="SUPFAM" id="SSF50104">
    <property type="entry name" value="Translation proteins SH3-like domain"/>
    <property type="match status" value="1"/>
</dbReference>
<dbReference type="PROSITE" id="PS00467">
    <property type="entry name" value="RIBOSOMAL_L2"/>
    <property type="match status" value="1"/>
</dbReference>
<accession>B5ZYT8</accession>
<sequence length="278" mass="30364">MALKTFNPITPSQRQLVIVDRSALYKGKPVKALTEGLTKSGGRNNLGRITARFIGGGHKRTYRLIDFKRRKFDVEGTVERIEYDPNRTAFIALVNYADGEKAYILAPQRLAAGDKVIASEKAVDVKPGNTMPLQFIPVGSIIHNVEMKPGKGGQIARSAGGYAQLVGRDQGMAILRLNSGEQRLVHGSCLASIGAVSNPDHANINDGKAGRTVWRGKRPHNRGVVMNPVDHPHGGGEGRTSGGRHPVTPWGKPTKGKRTRSNKSTDKMIMRSRHQRKK</sequence>
<evidence type="ECO:0000255" key="1">
    <source>
        <dbReference type="HAMAP-Rule" id="MF_01320"/>
    </source>
</evidence>
<evidence type="ECO:0000256" key="2">
    <source>
        <dbReference type="SAM" id="MobiDB-lite"/>
    </source>
</evidence>
<evidence type="ECO:0000305" key="3"/>
<feature type="chain" id="PRO_1000141603" description="Large ribosomal subunit protein uL2">
    <location>
        <begin position="1"/>
        <end position="278"/>
    </location>
</feature>
<feature type="region of interest" description="Disordered" evidence="2">
    <location>
        <begin position="202"/>
        <end position="278"/>
    </location>
</feature>
<comment type="function">
    <text evidence="1">One of the primary rRNA binding proteins. Required for association of the 30S and 50S subunits to form the 70S ribosome, for tRNA binding and peptide bond formation. It has been suggested to have peptidyltransferase activity; this is somewhat controversial. Makes several contacts with the 16S rRNA in the 70S ribosome.</text>
</comment>
<comment type="subunit">
    <text evidence="1">Part of the 50S ribosomal subunit. Forms a bridge to the 30S subunit in the 70S ribosome.</text>
</comment>
<comment type="similarity">
    <text evidence="1">Belongs to the universal ribosomal protein uL2 family.</text>
</comment>
<proteinExistence type="inferred from homology"/>
<reference key="1">
    <citation type="journal article" date="2010" name="Stand. Genomic Sci.">
        <title>Complete genome sequence of Rhizobium leguminosarum bv trifolii strain WSM2304, an effective microsymbiont of the South American clover Trifolium polymorphum.</title>
        <authorList>
            <person name="Reeve W."/>
            <person name="O'Hara G."/>
            <person name="Chain P."/>
            <person name="Ardley J."/>
            <person name="Brau L."/>
            <person name="Nandesena K."/>
            <person name="Tiwari R."/>
            <person name="Malfatti S."/>
            <person name="Kiss H."/>
            <person name="Lapidus A."/>
            <person name="Copeland A."/>
            <person name="Nolan M."/>
            <person name="Land M."/>
            <person name="Ivanova N."/>
            <person name="Mavromatis K."/>
            <person name="Markowitz V."/>
            <person name="Kyrpides N."/>
            <person name="Melino V."/>
            <person name="Denton M."/>
            <person name="Yates R."/>
            <person name="Howieson J."/>
        </authorList>
    </citation>
    <scope>NUCLEOTIDE SEQUENCE [LARGE SCALE GENOMIC DNA]</scope>
    <source>
        <strain>WSM2304</strain>
    </source>
</reference>
<gene>
    <name evidence="1" type="primary">rplB</name>
    <name type="ordered locus">Rleg2_1335</name>
</gene>
<keyword id="KW-1185">Reference proteome</keyword>
<keyword id="KW-0687">Ribonucleoprotein</keyword>
<keyword id="KW-0689">Ribosomal protein</keyword>
<keyword id="KW-0694">RNA-binding</keyword>
<keyword id="KW-0699">rRNA-binding</keyword>
<name>RL2_RHILW</name>